<proteinExistence type="inferred from homology"/>
<organism>
    <name type="scientific">Corynebacterium jeikeium (strain K411)</name>
    <dbReference type="NCBI Taxonomy" id="306537"/>
    <lineage>
        <taxon>Bacteria</taxon>
        <taxon>Bacillati</taxon>
        <taxon>Actinomycetota</taxon>
        <taxon>Actinomycetes</taxon>
        <taxon>Mycobacteriales</taxon>
        <taxon>Corynebacteriaceae</taxon>
        <taxon>Corynebacterium</taxon>
    </lineage>
</organism>
<dbReference type="EMBL" id="CR931997">
    <property type="protein sequence ID" value="CAI37305.1"/>
    <property type="molecule type" value="Genomic_DNA"/>
</dbReference>
<dbReference type="RefSeq" id="WP_005295180.1">
    <property type="nucleotide sequence ID" value="NC_007164.1"/>
</dbReference>
<dbReference type="SMR" id="Q4JV52"/>
<dbReference type="STRING" id="306537.jk1141"/>
<dbReference type="GeneID" id="92738660"/>
<dbReference type="KEGG" id="cjk:jk1141"/>
<dbReference type="eggNOG" id="COG0858">
    <property type="taxonomic scope" value="Bacteria"/>
</dbReference>
<dbReference type="HOGENOM" id="CLU_089475_0_0_11"/>
<dbReference type="OrthoDB" id="307788at2"/>
<dbReference type="Proteomes" id="UP000000545">
    <property type="component" value="Chromosome"/>
</dbReference>
<dbReference type="GO" id="GO:0005829">
    <property type="term" value="C:cytosol"/>
    <property type="evidence" value="ECO:0007669"/>
    <property type="project" value="TreeGrafter"/>
</dbReference>
<dbReference type="GO" id="GO:0043024">
    <property type="term" value="F:ribosomal small subunit binding"/>
    <property type="evidence" value="ECO:0007669"/>
    <property type="project" value="TreeGrafter"/>
</dbReference>
<dbReference type="GO" id="GO:0030490">
    <property type="term" value="P:maturation of SSU-rRNA"/>
    <property type="evidence" value="ECO:0007669"/>
    <property type="project" value="UniProtKB-UniRule"/>
</dbReference>
<dbReference type="Gene3D" id="3.30.300.20">
    <property type="match status" value="1"/>
</dbReference>
<dbReference type="HAMAP" id="MF_00003">
    <property type="entry name" value="RbfA"/>
    <property type="match status" value="1"/>
</dbReference>
<dbReference type="InterPro" id="IPR015946">
    <property type="entry name" value="KH_dom-like_a/b"/>
</dbReference>
<dbReference type="InterPro" id="IPR000238">
    <property type="entry name" value="RbfA"/>
</dbReference>
<dbReference type="InterPro" id="IPR023799">
    <property type="entry name" value="RbfA_dom_sf"/>
</dbReference>
<dbReference type="InterPro" id="IPR020053">
    <property type="entry name" value="Ribosome-bd_factorA_CS"/>
</dbReference>
<dbReference type="NCBIfam" id="TIGR00082">
    <property type="entry name" value="rbfA"/>
    <property type="match status" value="1"/>
</dbReference>
<dbReference type="PANTHER" id="PTHR33515">
    <property type="entry name" value="RIBOSOME-BINDING FACTOR A, CHLOROPLASTIC-RELATED"/>
    <property type="match status" value="1"/>
</dbReference>
<dbReference type="PANTHER" id="PTHR33515:SF1">
    <property type="entry name" value="RIBOSOME-BINDING FACTOR A, CHLOROPLASTIC-RELATED"/>
    <property type="match status" value="1"/>
</dbReference>
<dbReference type="Pfam" id="PF02033">
    <property type="entry name" value="RBFA"/>
    <property type="match status" value="1"/>
</dbReference>
<dbReference type="SUPFAM" id="SSF89919">
    <property type="entry name" value="Ribosome-binding factor A, RbfA"/>
    <property type="match status" value="1"/>
</dbReference>
<dbReference type="PROSITE" id="PS01319">
    <property type="entry name" value="RBFA"/>
    <property type="match status" value="1"/>
</dbReference>
<name>RBFA_CORJK</name>
<protein>
    <recommendedName>
        <fullName evidence="1">Ribosome-binding factor A</fullName>
    </recommendedName>
</protein>
<feature type="chain" id="PRO_1000000102" description="Ribosome-binding factor A">
    <location>
        <begin position="1"/>
        <end position="141"/>
    </location>
</feature>
<feature type="region of interest" description="Disordered" evidence="2">
    <location>
        <begin position="120"/>
        <end position="141"/>
    </location>
</feature>
<sequence>MVDHARAARMAKRIQQIVATAIERQIKDPRLEFVTITDARVTGDLHDATVFYTVRGKTVDAEPDTATAEAALAKATGQLRKIVGDQLSVRFTPTLSFSLDTVPEASAHFEELLARAKAQDEALRAQSAGARPAGDEDPYKP</sequence>
<accession>Q4JV52</accession>
<keyword id="KW-0963">Cytoplasm</keyword>
<keyword id="KW-1185">Reference proteome</keyword>
<keyword id="KW-0690">Ribosome biogenesis</keyword>
<gene>
    <name evidence="1" type="primary">rbfA</name>
    <name type="ordered locus">jk1141</name>
</gene>
<reference key="1">
    <citation type="journal article" date="2005" name="J. Bacteriol.">
        <title>Complete genome sequence and analysis of the multiresistant nosocomial pathogen Corynebacterium jeikeium K411, a lipid-requiring bacterium of the human skin flora.</title>
        <authorList>
            <person name="Tauch A."/>
            <person name="Kaiser O."/>
            <person name="Hain T."/>
            <person name="Goesmann A."/>
            <person name="Weisshaar B."/>
            <person name="Albersmeier A."/>
            <person name="Bekel T."/>
            <person name="Bischoff N."/>
            <person name="Brune I."/>
            <person name="Chakraborty T."/>
            <person name="Kalinowski J."/>
            <person name="Meyer F."/>
            <person name="Rupp O."/>
            <person name="Schneiker S."/>
            <person name="Viehoever P."/>
            <person name="Puehler A."/>
        </authorList>
    </citation>
    <scope>NUCLEOTIDE SEQUENCE [LARGE SCALE GENOMIC DNA]</scope>
    <source>
        <strain>K411</strain>
    </source>
</reference>
<comment type="function">
    <text evidence="1">One of several proteins that assist in the late maturation steps of the functional core of the 30S ribosomal subunit. Associates with free 30S ribosomal subunits (but not with 30S subunits that are part of 70S ribosomes or polysomes). Required for efficient processing of 16S rRNA. May interact with the 5'-terminal helix region of 16S rRNA.</text>
</comment>
<comment type="subunit">
    <text evidence="1">Monomer. Binds 30S ribosomal subunits, but not 50S ribosomal subunits or 70S ribosomes.</text>
</comment>
<comment type="subcellular location">
    <subcellularLocation>
        <location evidence="1">Cytoplasm</location>
    </subcellularLocation>
</comment>
<comment type="similarity">
    <text evidence="1">Belongs to the RbfA family.</text>
</comment>
<evidence type="ECO:0000255" key="1">
    <source>
        <dbReference type="HAMAP-Rule" id="MF_00003"/>
    </source>
</evidence>
<evidence type="ECO:0000256" key="2">
    <source>
        <dbReference type="SAM" id="MobiDB-lite"/>
    </source>
</evidence>